<evidence type="ECO:0000250" key="1"/>
<evidence type="ECO:0000250" key="2">
    <source>
        <dbReference type="UniProtKB" id="Q6PCP5"/>
    </source>
</evidence>
<evidence type="ECO:0000250" key="3">
    <source>
        <dbReference type="UniProtKB" id="Q9GZY8"/>
    </source>
</evidence>
<evidence type="ECO:0000255" key="4"/>
<evidence type="ECO:0000269" key="5">
    <source>
    </source>
</evidence>
<evidence type="ECO:0000305" key="6"/>
<evidence type="ECO:0007744" key="7">
    <source>
    </source>
</evidence>
<feature type="chain" id="PRO_0000289187" description="Mitochondrial fission factor">
    <location>
        <begin position="1"/>
        <end position="218"/>
    </location>
</feature>
<feature type="topological domain" description="Cytoplasmic" evidence="4">
    <location>
        <begin position="1"/>
        <end position="198"/>
    </location>
</feature>
<feature type="transmembrane region" description="Helical; Anchor for type IV membrane protein" evidence="4">
    <location>
        <begin position="199"/>
        <end position="216"/>
    </location>
</feature>
<feature type="topological domain" description="Mitochondrial intermembrane" evidence="4">
    <location>
        <begin position="217"/>
        <end position="218"/>
    </location>
</feature>
<feature type="coiled-coil region" evidence="4">
    <location>
        <begin position="167"/>
        <end position="198"/>
    </location>
</feature>
<feature type="modified residue" description="Phosphothreonine" evidence="3">
    <location>
        <position position="89"/>
    </location>
</feature>
<feature type="modified residue" description="Phosphoserine" evidence="3">
    <location>
        <position position="129"/>
    </location>
</feature>
<feature type="modified residue" description="Phosphoserine" evidence="7">
    <location>
        <position position="131"/>
    </location>
</feature>
<feature type="modified residue" description="Phosphoserine" evidence="2">
    <location>
        <position position="146"/>
    </location>
</feature>
<feature type="modified residue" description="Phosphoserine" evidence="2">
    <location>
        <position position="171"/>
    </location>
</feature>
<proteinExistence type="evidence at protein level"/>
<name>MFF_RAT</name>
<protein>
    <recommendedName>
        <fullName>Mitochondrial fission factor</fullName>
    </recommendedName>
</protein>
<gene>
    <name type="primary">Mff</name>
</gene>
<dbReference type="EMBL" id="BC098682">
    <property type="protein sequence ID" value="AAH98682.1"/>
    <property type="molecule type" value="mRNA"/>
</dbReference>
<dbReference type="RefSeq" id="NP_001034104.1">
    <property type="nucleotide sequence ID" value="NM_001039015.2"/>
</dbReference>
<dbReference type="RefSeq" id="NP_001258213.1">
    <property type="nucleotide sequence ID" value="NM_001271284.1"/>
</dbReference>
<dbReference type="RefSeq" id="NP_001263330.1">
    <property type="nucleotide sequence ID" value="NM_001276401.1"/>
</dbReference>
<dbReference type="RefSeq" id="XP_006245273.2">
    <property type="nucleotide sequence ID" value="XM_006245211.4"/>
</dbReference>
<dbReference type="RefSeq" id="XP_008765547.1">
    <property type="nucleotide sequence ID" value="XM_008767325.1"/>
</dbReference>
<dbReference type="RefSeq" id="XP_017459407.1">
    <property type="nucleotide sequence ID" value="XM_017603918.1"/>
</dbReference>
<dbReference type="SMR" id="Q4KM98"/>
<dbReference type="BioGRID" id="257006">
    <property type="interactions" value="1"/>
</dbReference>
<dbReference type="CORUM" id="Q4KM98"/>
<dbReference type="DIP" id="DIP-60704N"/>
<dbReference type="FunCoup" id="Q4KM98">
    <property type="interactions" value="4001"/>
</dbReference>
<dbReference type="IntAct" id="Q4KM98">
    <property type="interactions" value="3"/>
</dbReference>
<dbReference type="GlyGen" id="Q4KM98">
    <property type="glycosylation" value="1 site"/>
</dbReference>
<dbReference type="iPTMnet" id="Q4KM98"/>
<dbReference type="PhosphoSitePlus" id="Q4KM98"/>
<dbReference type="jPOST" id="Q4KM98"/>
<dbReference type="PaxDb" id="10116-ENSRNOP00000020705"/>
<dbReference type="ABCD" id="Q4KM98">
    <property type="antibodies" value="2 sequenced antibodies"/>
</dbReference>
<dbReference type="GeneID" id="301563"/>
<dbReference type="KEGG" id="rno:301563"/>
<dbReference type="UCSC" id="RGD:1310230">
    <property type="organism name" value="rat"/>
</dbReference>
<dbReference type="AGR" id="RGD:1310230"/>
<dbReference type="CTD" id="56947"/>
<dbReference type="RGD" id="1310230">
    <property type="gene designation" value="Mff"/>
</dbReference>
<dbReference type="eggNOG" id="ENOG502R96B">
    <property type="taxonomic scope" value="Eukaryota"/>
</dbReference>
<dbReference type="InParanoid" id="Q4KM98"/>
<dbReference type="PRO" id="PR:Q4KM98"/>
<dbReference type="Proteomes" id="UP000002494">
    <property type="component" value="Unplaced"/>
</dbReference>
<dbReference type="GO" id="GO:0031966">
    <property type="term" value="C:mitochondrial membrane"/>
    <property type="evidence" value="ECO:0000266"/>
    <property type="project" value="RGD"/>
</dbReference>
<dbReference type="GO" id="GO:0005741">
    <property type="term" value="C:mitochondrial outer membrane"/>
    <property type="evidence" value="ECO:0000250"/>
    <property type="project" value="UniProtKB"/>
</dbReference>
<dbReference type="GO" id="GO:0005739">
    <property type="term" value="C:mitochondrion"/>
    <property type="evidence" value="ECO:0000266"/>
    <property type="project" value="RGD"/>
</dbReference>
<dbReference type="GO" id="GO:0005777">
    <property type="term" value="C:peroxisome"/>
    <property type="evidence" value="ECO:0000250"/>
    <property type="project" value="UniProtKB"/>
</dbReference>
<dbReference type="GO" id="GO:0032991">
    <property type="term" value="C:protein-containing complex"/>
    <property type="evidence" value="ECO:0000266"/>
    <property type="project" value="RGD"/>
</dbReference>
<dbReference type="GO" id="GO:0008021">
    <property type="term" value="C:synaptic vesicle"/>
    <property type="evidence" value="ECO:0000314"/>
    <property type="project" value="RGD"/>
</dbReference>
<dbReference type="GO" id="GO:0051020">
    <property type="term" value="F:GTPase binding"/>
    <property type="evidence" value="ECO:0000353"/>
    <property type="project" value="CAFA"/>
</dbReference>
<dbReference type="GO" id="GO:0042802">
    <property type="term" value="F:identical protein binding"/>
    <property type="evidence" value="ECO:0000266"/>
    <property type="project" value="RGD"/>
</dbReference>
<dbReference type="GO" id="GO:0042803">
    <property type="term" value="F:protein homodimerization activity"/>
    <property type="evidence" value="ECO:0000250"/>
    <property type="project" value="UniProtKB"/>
</dbReference>
<dbReference type="GO" id="GO:0044877">
    <property type="term" value="F:protein-containing complex binding"/>
    <property type="evidence" value="ECO:0000353"/>
    <property type="project" value="RGD"/>
</dbReference>
<dbReference type="GO" id="GO:0070301">
    <property type="term" value="P:cellular response to hydrogen peroxide"/>
    <property type="evidence" value="ECO:0000270"/>
    <property type="project" value="RGD"/>
</dbReference>
<dbReference type="GO" id="GO:0000266">
    <property type="term" value="P:mitochondrial fission"/>
    <property type="evidence" value="ECO:0000250"/>
    <property type="project" value="UniProtKB"/>
</dbReference>
<dbReference type="GO" id="GO:0007005">
    <property type="term" value="P:mitochondrion organization"/>
    <property type="evidence" value="ECO:0000266"/>
    <property type="project" value="RGD"/>
</dbReference>
<dbReference type="GO" id="GO:0016559">
    <property type="term" value="P:peroxisome fission"/>
    <property type="evidence" value="ECO:0000266"/>
    <property type="project" value="RGD"/>
</dbReference>
<dbReference type="GO" id="GO:0010666">
    <property type="term" value="P:positive regulation of cardiac muscle cell apoptotic process"/>
    <property type="evidence" value="ECO:0000315"/>
    <property type="project" value="RGD"/>
</dbReference>
<dbReference type="GO" id="GO:0090141">
    <property type="term" value="P:positive regulation of mitochondrial fission"/>
    <property type="evidence" value="ECO:0000315"/>
    <property type="project" value="RGD"/>
</dbReference>
<dbReference type="GO" id="GO:1900244">
    <property type="term" value="P:positive regulation of synaptic vesicle endocytosis"/>
    <property type="evidence" value="ECO:0000315"/>
    <property type="project" value="CAFA"/>
</dbReference>
<dbReference type="GO" id="GO:0006626">
    <property type="term" value="P:protein targeting to mitochondrion"/>
    <property type="evidence" value="ECO:0000315"/>
    <property type="project" value="CAFA"/>
</dbReference>
<dbReference type="InterPro" id="IPR039433">
    <property type="entry name" value="Mff-like_dom"/>
</dbReference>
<dbReference type="InterPro" id="IPR008518">
    <property type="entry name" value="Mff/Tango-11"/>
</dbReference>
<dbReference type="PANTHER" id="PTHR16501:SF17">
    <property type="entry name" value="MITOCHONDRIAL FISSION FACTOR"/>
    <property type="match status" value="1"/>
</dbReference>
<dbReference type="PANTHER" id="PTHR16501">
    <property type="entry name" value="TRANSPORT AND GOLGI ORGANIZATION PROTEIN 11"/>
    <property type="match status" value="1"/>
</dbReference>
<dbReference type="Pfam" id="PF05644">
    <property type="entry name" value="Miff"/>
    <property type="match status" value="2"/>
</dbReference>
<comment type="function">
    <text evidence="3 5">Plays a role in mitochondrial and peroxisomal fission (By similarity). Promotes the recruitment and association of the fission mediator dynamin-related protein 1 (DNM1L) to the mitochondrial surface (By similarity). May be involved in regulation of synaptic vesicle membrane dynamics by recruitment of DNM1L to clathrin-containing vesicles (PubMed:23792689).</text>
</comment>
<comment type="subunit">
    <text evidence="2 5">Homodimer. Interacts with DNM1L (PubMed:23792689). Interacts with C11orf65/MFI; the interaction inhibits MFF interaction with DNM1L (By similarity).</text>
</comment>
<comment type="subcellular location">
    <subcellularLocation>
        <location evidence="2">Mitochondrion outer membrane</location>
        <topology evidence="4">Single-pass type IV membrane protein</topology>
    </subcellularLocation>
    <subcellularLocation>
        <location evidence="1">Peroxisome</location>
    </subcellularLocation>
    <subcellularLocation>
        <location evidence="5">Cytoplasmic vesicle</location>
        <location evidence="5">Secretory vesicle</location>
        <location evidence="5">Synaptic vesicle</location>
    </subcellularLocation>
</comment>
<comment type="similarity">
    <text evidence="6">Belongs to the Tango11 family.</text>
</comment>
<reference key="1">
    <citation type="journal article" date="2004" name="Genome Res.">
        <title>The status, quality, and expansion of the NIH full-length cDNA project: the Mammalian Gene Collection (MGC).</title>
        <authorList>
            <consortium name="The MGC Project Team"/>
        </authorList>
    </citation>
    <scope>NUCLEOTIDE SEQUENCE [LARGE SCALE MRNA]</scope>
    <source>
        <tissue>Thymus</tissue>
    </source>
</reference>
<reference key="2">
    <citation type="journal article" date="2012" name="Nat. Commun.">
        <title>Quantitative maps of protein phosphorylation sites across 14 different rat organs and tissues.</title>
        <authorList>
            <person name="Lundby A."/>
            <person name="Secher A."/>
            <person name="Lage K."/>
            <person name="Nordsborg N.B."/>
            <person name="Dmytriyev A."/>
            <person name="Lundby C."/>
            <person name="Olsen J.V."/>
        </authorList>
    </citation>
    <scope>PHOSPHORYLATION [LARGE SCALE ANALYSIS] AT SER-131</scope>
    <scope>IDENTIFICATION BY MASS SPECTROMETRY [LARGE SCALE ANALYSIS]</scope>
</reference>
<reference key="3">
    <citation type="journal article" date="2013" name="Nat. Cell Biol.">
        <title>A Bcl-xL-Drp1 complex regulates synaptic vesicle membrane dynamics during endocytosis.</title>
        <authorList>
            <person name="Li H."/>
            <person name="Alavian K.N."/>
            <person name="Lazrove E."/>
            <person name="Mehta N."/>
            <person name="Jones A."/>
            <person name="Zhang P."/>
            <person name="Licznerski P."/>
            <person name="Graham M."/>
            <person name="Uo T."/>
            <person name="Guo J."/>
            <person name="Rahner C."/>
            <person name="Duman R.S."/>
            <person name="Morrison R.S."/>
            <person name="Jonas E.A."/>
        </authorList>
    </citation>
    <scope>FUNCTION IN SYNAPTIC VESICLE REGULATION</scope>
    <scope>INTERACTION WITH DNM1L</scope>
    <scope>SUBCELLULAR LOCATION</scope>
</reference>
<accession>Q4KM98</accession>
<keyword id="KW-0175">Coiled coil</keyword>
<keyword id="KW-0968">Cytoplasmic vesicle</keyword>
<keyword id="KW-0472">Membrane</keyword>
<keyword id="KW-0496">Mitochondrion</keyword>
<keyword id="KW-1000">Mitochondrion outer membrane</keyword>
<keyword id="KW-0576">Peroxisome</keyword>
<keyword id="KW-0597">Phosphoprotein</keyword>
<keyword id="KW-1185">Reference proteome</keyword>
<keyword id="KW-0770">Synapse</keyword>
<keyword id="KW-0812">Transmembrane</keyword>
<keyword id="KW-1133">Transmembrane helix</keyword>
<organism>
    <name type="scientific">Rattus norvegicus</name>
    <name type="common">Rat</name>
    <dbReference type="NCBI Taxonomy" id="10116"/>
    <lineage>
        <taxon>Eukaryota</taxon>
        <taxon>Metazoa</taxon>
        <taxon>Chordata</taxon>
        <taxon>Craniata</taxon>
        <taxon>Vertebrata</taxon>
        <taxon>Euteleostomi</taxon>
        <taxon>Mammalia</taxon>
        <taxon>Eutheria</taxon>
        <taxon>Euarchontoglires</taxon>
        <taxon>Glires</taxon>
        <taxon>Rodentia</taxon>
        <taxon>Myomorpha</taxon>
        <taxon>Muroidea</taxon>
        <taxon>Muridae</taxon>
        <taxon>Murinae</taxon>
        <taxon>Rattus</taxon>
    </lineage>
</organism>
<sequence length="218" mass="24971">MAEISRIQYEMEYTEGISQRMRVPEKLKVAPPNADLEQGFQDGVPNASVIMQVPERIVVTGNNEDISFSRPADLDLIQSTPFKPLALKTPPRVLTLSERPLDFLDLERPPPTPQSEEIRAVGRLKRERSMSENAVRQNGQLVRNDSMYGISSLDAAVEGASEDMSVVDAASLRRQIIKLNRRLQLLEEENKERAKREMVMYSITVAFWLLNSWLWFRR</sequence>